<organism>
    <name type="scientific">Oceanobacillus iheyensis (strain DSM 14371 / CIP 107618 / JCM 11309 / KCTC 3954 / HTE831)</name>
    <dbReference type="NCBI Taxonomy" id="221109"/>
    <lineage>
        <taxon>Bacteria</taxon>
        <taxon>Bacillati</taxon>
        <taxon>Bacillota</taxon>
        <taxon>Bacilli</taxon>
        <taxon>Bacillales</taxon>
        <taxon>Bacillaceae</taxon>
        <taxon>Oceanobacillus</taxon>
    </lineage>
</organism>
<name>PTH_OCEIH</name>
<reference key="1">
    <citation type="journal article" date="2002" name="Nucleic Acids Res.">
        <title>Genome sequence of Oceanobacillus iheyensis isolated from the Iheya Ridge and its unexpected adaptive capabilities to extreme environments.</title>
        <authorList>
            <person name="Takami H."/>
            <person name="Takaki Y."/>
            <person name="Uchiyama I."/>
        </authorList>
    </citation>
    <scope>NUCLEOTIDE SEQUENCE [LARGE SCALE GENOMIC DNA]</scope>
    <source>
        <strain>DSM 14371 / CIP 107618 / JCM 11309 / KCTC 3954 / HTE831</strain>
    </source>
</reference>
<dbReference type="EC" id="3.1.1.29" evidence="1"/>
<dbReference type="EMBL" id="BA000028">
    <property type="protein sequence ID" value="BAC12017.1"/>
    <property type="molecule type" value="Genomic_DNA"/>
</dbReference>
<dbReference type="RefSeq" id="WP_011064463.1">
    <property type="nucleotide sequence ID" value="NC_004193.1"/>
</dbReference>
<dbReference type="SMR" id="Q8CXP8"/>
<dbReference type="STRING" id="221109.gene:10732223"/>
<dbReference type="KEGG" id="oih:OB0061"/>
<dbReference type="eggNOG" id="COG0193">
    <property type="taxonomic scope" value="Bacteria"/>
</dbReference>
<dbReference type="HOGENOM" id="CLU_062456_4_1_9"/>
<dbReference type="OrthoDB" id="9800507at2"/>
<dbReference type="PhylomeDB" id="Q8CXP8"/>
<dbReference type="Proteomes" id="UP000000822">
    <property type="component" value="Chromosome"/>
</dbReference>
<dbReference type="GO" id="GO:0005737">
    <property type="term" value="C:cytoplasm"/>
    <property type="evidence" value="ECO:0007669"/>
    <property type="project" value="UniProtKB-SubCell"/>
</dbReference>
<dbReference type="GO" id="GO:0004045">
    <property type="term" value="F:peptidyl-tRNA hydrolase activity"/>
    <property type="evidence" value="ECO:0007669"/>
    <property type="project" value="UniProtKB-UniRule"/>
</dbReference>
<dbReference type="GO" id="GO:0000049">
    <property type="term" value="F:tRNA binding"/>
    <property type="evidence" value="ECO:0007669"/>
    <property type="project" value="UniProtKB-UniRule"/>
</dbReference>
<dbReference type="GO" id="GO:0006515">
    <property type="term" value="P:protein quality control for misfolded or incompletely synthesized proteins"/>
    <property type="evidence" value="ECO:0007669"/>
    <property type="project" value="UniProtKB-UniRule"/>
</dbReference>
<dbReference type="GO" id="GO:0072344">
    <property type="term" value="P:rescue of stalled ribosome"/>
    <property type="evidence" value="ECO:0007669"/>
    <property type="project" value="UniProtKB-UniRule"/>
</dbReference>
<dbReference type="CDD" id="cd00462">
    <property type="entry name" value="PTH"/>
    <property type="match status" value="1"/>
</dbReference>
<dbReference type="FunFam" id="3.40.50.1470:FF:000001">
    <property type="entry name" value="Peptidyl-tRNA hydrolase"/>
    <property type="match status" value="1"/>
</dbReference>
<dbReference type="Gene3D" id="3.40.50.1470">
    <property type="entry name" value="Peptidyl-tRNA hydrolase"/>
    <property type="match status" value="1"/>
</dbReference>
<dbReference type="HAMAP" id="MF_00083">
    <property type="entry name" value="Pept_tRNA_hydro_bact"/>
    <property type="match status" value="1"/>
</dbReference>
<dbReference type="InterPro" id="IPR001328">
    <property type="entry name" value="Pept_tRNA_hydro"/>
</dbReference>
<dbReference type="InterPro" id="IPR018171">
    <property type="entry name" value="Pept_tRNA_hydro_CS"/>
</dbReference>
<dbReference type="InterPro" id="IPR036416">
    <property type="entry name" value="Pept_tRNA_hydro_sf"/>
</dbReference>
<dbReference type="NCBIfam" id="TIGR00447">
    <property type="entry name" value="pth"/>
    <property type="match status" value="1"/>
</dbReference>
<dbReference type="PANTHER" id="PTHR17224">
    <property type="entry name" value="PEPTIDYL-TRNA HYDROLASE"/>
    <property type="match status" value="1"/>
</dbReference>
<dbReference type="PANTHER" id="PTHR17224:SF1">
    <property type="entry name" value="PEPTIDYL-TRNA HYDROLASE"/>
    <property type="match status" value="1"/>
</dbReference>
<dbReference type="Pfam" id="PF01195">
    <property type="entry name" value="Pept_tRNA_hydro"/>
    <property type="match status" value="1"/>
</dbReference>
<dbReference type="SUPFAM" id="SSF53178">
    <property type="entry name" value="Peptidyl-tRNA hydrolase-like"/>
    <property type="match status" value="1"/>
</dbReference>
<dbReference type="PROSITE" id="PS01195">
    <property type="entry name" value="PEPT_TRNA_HYDROL_1"/>
    <property type="match status" value="1"/>
</dbReference>
<dbReference type="PROSITE" id="PS01196">
    <property type="entry name" value="PEPT_TRNA_HYDROL_2"/>
    <property type="match status" value="1"/>
</dbReference>
<evidence type="ECO:0000255" key="1">
    <source>
        <dbReference type="HAMAP-Rule" id="MF_00083"/>
    </source>
</evidence>
<protein>
    <recommendedName>
        <fullName evidence="1">Peptidyl-tRNA hydrolase</fullName>
        <shortName evidence="1">Pth</shortName>
        <ecNumber evidence="1">3.1.1.29</ecNumber>
    </recommendedName>
</protein>
<accession>Q8CXP8</accession>
<keyword id="KW-0963">Cytoplasm</keyword>
<keyword id="KW-0378">Hydrolase</keyword>
<keyword id="KW-1185">Reference proteome</keyword>
<keyword id="KW-0694">RNA-binding</keyword>
<keyword id="KW-0820">tRNA-binding</keyword>
<gene>
    <name evidence="1" type="primary">pth</name>
    <name type="ordered locus">OB0061</name>
</gene>
<comment type="function">
    <text evidence="1">Hydrolyzes ribosome-free peptidyl-tRNAs (with 1 or more amino acids incorporated), which drop off the ribosome during protein synthesis, or as a result of ribosome stalling.</text>
</comment>
<comment type="function">
    <text evidence="1">Catalyzes the release of premature peptidyl moieties from peptidyl-tRNA molecules trapped in stalled 50S ribosomal subunits, and thus maintains levels of free tRNAs and 50S ribosomes.</text>
</comment>
<comment type="catalytic activity">
    <reaction evidence="1">
        <text>an N-acyl-L-alpha-aminoacyl-tRNA + H2O = an N-acyl-L-amino acid + a tRNA + H(+)</text>
        <dbReference type="Rhea" id="RHEA:54448"/>
        <dbReference type="Rhea" id="RHEA-COMP:10123"/>
        <dbReference type="Rhea" id="RHEA-COMP:13883"/>
        <dbReference type="ChEBI" id="CHEBI:15377"/>
        <dbReference type="ChEBI" id="CHEBI:15378"/>
        <dbReference type="ChEBI" id="CHEBI:59874"/>
        <dbReference type="ChEBI" id="CHEBI:78442"/>
        <dbReference type="ChEBI" id="CHEBI:138191"/>
        <dbReference type="EC" id="3.1.1.29"/>
    </reaction>
</comment>
<comment type="subunit">
    <text evidence="1">Monomer.</text>
</comment>
<comment type="subcellular location">
    <subcellularLocation>
        <location evidence="1">Cytoplasm</location>
    </subcellularLocation>
</comment>
<comment type="similarity">
    <text evidence="1">Belongs to the PTH family.</text>
</comment>
<sequence>MKLIVGLGNPGRKFKKTRHNIGFFVIDELLQRHKWKLNNSKFEGDYSIEHFDGEKVILLQPQTYMNLSGKSISPLMDYFDIDVDDVIVVYDDLDLPTGKIRLRQKGGHGGHNGVRSTIDHLGTKDFKRVRLGIGRPTNATPVIDYVLGKFPKQETTAVTDSVEKAADAIEAWIKGKPFLEVMNDFNQ</sequence>
<proteinExistence type="inferred from homology"/>
<feature type="chain" id="PRO_0000187786" description="Peptidyl-tRNA hydrolase">
    <location>
        <begin position="1"/>
        <end position="187"/>
    </location>
</feature>
<feature type="active site" description="Proton acceptor" evidence="1">
    <location>
        <position position="19"/>
    </location>
</feature>
<feature type="binding site" evidence="1">
    <location>
        <position position="14"/>
    </location>
    <ligand>
        <name>tRNA</name>
        <dbReference type="ChEBI" id="CHEBI:17843"/>
    </ligand>
</feature>
<feature type="binding site" evidence="1">
    <location>
        <position position="64"/>
    </location>
    <ligand>
        <name>tRNA</name>
        <dbReference type="ChEBI" id="CHEBI:17843"/>
    </ligand>
</feature>
<feature type="binding site" evidence="1">
    <location>
        <position position="66"/>
    </location>
    <ligand>
        <name>tRNA</name>
        <dbReference type="ChEBI" id="CHEBI:17843"/>
    </ligand>
</feature>
<feature type="binding site" evidence="1">
    <location>
        <position position="112"/>
    </location>
    <ligand>
        <name>tRNA</name>
        <dbReference type="ChEBI" id="CHEBI:17843"/>
    </ligand>
</feature>
<feature type="site" description="Discriminates between blocked and unblocked aminoacyl-tRNA" evidence="1">
    <location>
        <position position="9"/>
    </location>
</feature>
<feature type="site" description="Stabilizes the basic form of H active site to accept a proton" evidence="1">
    <location>
        <position position="91"/>
    </location>
</feature>